<reference key="1">
    <citation type="journal article" date="2004" name="Nat. Biotechnol.">
        <title>The genome sequence of the extreme thermophile Thermus thermophilus.</title>
        <authorList>
            <person name="Henne A."/>
            <person name="Brueggemann H."/>
            <person name="Raasch C."/>
            <person name="Wiezer A."/>
            <person name="Hartsch T."/>
            <person name="Liesegang H."/>
            <person name="Johann A."/>
            <person name="Lienard T."/>
            <person name="Gohl O."/>
            <person name="Martinez-Arias R."/>
            <person name="Jacobi C."/>
            <person name="Starkuviene V."/>
            <person name="Schlenczeck S."/>
            <person name="Dencker S."/>
            <person name="Huber R."/>
            <person name="Klenk H.-P."/>
            <person name="Kramer W."/>
            <person name="Merkl R."/>
            <person name="Gottschalk G."/>
            <person name="Fritz H.-J."/>
        </authorList>
    </citation>
    <scope>NUCLEOTIDE SEQUENCE [LARGE SCALE GENOMIC DNA]</scope>
    <source>
        <strain>ATCC BAA-163 / DSM 7039 / HB27</strain>
    </source>
</reference>
<proteinExistence type="inferred from homology"/>
<comment type="function">
    <text evidence="1">Involved in the biosynthesis of the chorismate, which leads to the biosynthesis of aromatic amino acids. Catalyzes the reversible NADPH linked reduction of 3-dehydroshikimate (DHSA) to yield shikimate (SA).</text>
</comment>
<comment type="catalytic activity">
    <reaction evidence="1">
        <text>shikimate + NADP(+) = 3-dehydroshikimate + NADPH + H(+)</text>
        <dbReference type="Rhea" id="RHEA:17737"/>
        <dbReference type="ChEBI" id="CHEBI:15378"/>
        <dbReference type="ChEBI" id="CHEBI:16630"/>
        <dbReference type="ChEBI" id="CHEBI:36208"/>
        <dbReference type="ChEBI" id="CHEBI:57783"/>
        <dbReference type="ChEBI" id="CHEBI:58349"/>
        <dbReference type="EC" id="1.1.1.25"/>
    </reaction>
</comment>
<comment type="pathway">
    <text evidence="1">Metabolic intermediate biosynthesis; chorismate biosynthesis; chorismate from D-erythrose 4-phosphate and phosphoenolpyruvate: step 4/7.</text>
</comment>
<comment type="subunit">
    <text evidence="1">Homodimer.</text>
</comment>
<comment type="similarity">
    <text evidence="1">Belongs to the shikimate dehydrogenase family.</text>
</comment>
<accession>Q72JT0</accession>
<gene>
    <name evidence="1" type="primary">aroE</name>
    <name type="ordered locus">TT_C0688</name>
</gene>
<keyword id="KW-0028">Amino-acid biosynthesis</keyword>
<keyword id="KW-0057">Aromatic amino acid biosynthesis</keyword>
<keyword id="KW-0521">NADP</keyword>
<keyword id="KW-0560">Oxidoreductase</keyword>
<evidence type="ECO:0000255" key="1">
    <source>
        <dbReference type="HAMAP-Rule" id="MF_00222"/>
    </source>
</evidence>
<organism>
    <name type="scientific">Thermus thermophilus (strain ATCC BAA-163 / DSM 7039 / HB27)</name>
    <dbReference type="NCBI Taxonomy" id="262724"/>
    <lineage>
        <taxon>Bacteria</taxon>
        <taxon>Thermotogati</taxon>
        <taxon>Deinococcota</taxon>
        <taxon>Deinococci</taxon>
        <taxon>Thermales</taxon>
        <taxon>Thermaceae</taxon>
        <taxon>Thermus</taxon>
    </lineage>
</organism>
<dbReference type="EC" id="1.1.1.25" evidence="1"/>
<dbReference type="EMBL" id="AE017221">
    <property type="protein sequence ID" value="AAS81036.1"/>
    <property type="molecule type" value="Genomic_DNA"/>
</dbReference>
<dbReference type="RefSeq" id="WP_011173130.1">
    <property type="nucleotide sequence ID" value="NC_005835.1"/>
</dbReference>
<dbReference type="SMR" id="Q72JT0"/>
<dbReference type="KEGG" id="tth:TT_C0688"/>
<dbReference type="eggNOG" id="COG0169">
    <property type="taxonomic scope" value="Bacteria"/>
</dbReference>
<dbReference type="HOGENOM" id="CLU_044063_0_1_0"/>
<dbReference type="OrthoDB" id="9792692at2"/>
<dbReference type="UniPathway" id="UPA00053">
    <property type="reaction ID" value="UER00087"/>
</dbReference>
<dbReference type="Proteomes" id="UP000000592">
    <property type="component" value="Chromosome"/>
</dbReference>
<dbReference type="GO" id="GO:0005829">
    <property type="term" value="C:cytosol"/>
    <property type="evidence" value="ECO:0007669"/>
    <property type="project" value="TreeGrafter"/>
</dbReference>
<dbReference type="GO" id="GO:0050661">
    <property type="term" value="F:NADP binding"/>
    <property type="evidence" value="ECO:0007669"/>
    <property type="project" value="InterPro"/>
</dbReference>
<dbReference type="GO" id="GO:0004764">
    <property type="term" value="F:shikimate 3-dehydrogenase (NADP+) activity"/>
    <property type="evidence" value="ECO:0007669"/>
    <property type="project" value="UniProtKB-UniRule"/>
</dbReference>
<dbReference type="GO" id="GO:0008652">
    <property type="term" value="P:amino acid biosynthetic process"/>
    <property type="evidence" value="ECO:0007669"/>
    <property type="project" value="UniProtKB-KW"/>
</dbReference>
<dbReference type="GO" id="GO:0009073">
    <property type="term" value="P:aromatic amino acid family biosynthetic process"/>
    <property type="evidence" value="ECO:0007669"/>
    <property type="project" value="UniProtKB-KW"/>
</dbReference>
<dbReference type="GO" id="GO:0009423">
    <property type="term" value="P:chorismate biosynthetic process"/>
    <property type="evidence" value="ECO:0007669"/>
    <property type="project" value="UniProtKB-UniRule"/>
</dbReference>
<dbReference type="GO" id="GO:0019632">
    <property type="term" value="P:shikimate metabolic process"/>
    <property type="evidence" value="ECO:0007669"/>
    <property type="project" value="InterPro"/>
</dbReference>
<dbReference type="CDD" id="cd01065">
    <property type="entry name" value="NAD_bind_Shikimate_DH"/>
    <property type="match status" value="1"/>
</dbReference>
<dbReference type="FunFam" id="3.40.50.720:FF:000086">
    <property type="entry name" value="Quinate/shikimate dehydrogenase"/>
    <property type="match status" value="1"/>
</dbReference>
<dbReference type="Gene3D" id="3.40.50.10860">
    <property type="entry name" value="Leucine Dehydrogenase, chain A, domain 1"/>
    <property type="match status" value="1"/>
</dbReference>
<dbReference type="Gene3D" id="3.40.50.720">
    <property type="entry name" value="NAD(P)-binding Rossmann-like Domain"/>
    <property type="match status" value="1"/>
</dbReference>
<dbReference type="HAMAP" id="MF_00222">
    <property type="entry name" value="Shikimate_DH_AroE"/>
    <property type="match status" value="1"/>
</dbReference>
<dbReference type="InterPro" id="IPR046346">
    <property type="entry name" value="Aminoacid_DH-like_N_sf"/>
</dbReference>
<dbReference type="InterPro" id="IPR036291">
    <property type="entry name" value="NAD(P)-bd_dom_sf"/>
</dbReference>
<dbReference type="InterPro" id="IPR041121">
    <property type="entry name" value="SDH_C"/>
</dbReference>
<dbReference type="InterPro" id="IPR011342">
    <property type="entry name" value="Shikimate_DH"/>
</dbReference>
<dbReference type="InterPro" id="IPR013708">
    <property type="entry name" value="Shikimate_DH-bd_N"/>
</dbReference>
<dbReference type="InterPro" id="IPR022893">
    <property type="entry name" value="Shikimate_DH_fam"/>
</dbReference>
<dbReference type="InterPro" id="IPR006151">
    <property type="entry name" value="Shikm_DH/Glu-tRNA_Rdtase"/>
</dbReference>
<dbReference type="NCBIfam" id="TIGR00507">
    <property type="entry name" value="aroE"/>
    <property type="match status" value="1"/>
</dbReference>
<dbReference type="PANTHER" id="PTHR21089:SF1">
    <property type="entry name" value="BIFUNCTIONAL 3-DEHYDROQUINATE DEHYDRATASE_SHIKIMATE DEHYDROGENASE, CHLOROPLASTIC"/>
    <property type="match status" value="1"/>
</dbReference>
<dbReference type="PANTHER" id="PTHR21089">
    <property type="entry name" value="SHIKIMATE DEHYDROGENASE"/>
    <property type="match status" value="1"/>
</dbReference>
<dbReference type="Pfam" id="PF18317">
    <property type="entry name" value="SDH_C"/>
    <property type="match status" value="1"/>
</dbReference>
<dbReference type="Pfam" id="PF01488">
    <property type="entry name" value="Shikimate_DH"/>
    <property type="match status" value="1"/>
</dbReference>
<dbReference type="Pfam" id="PF08501">
    <property type="entry name" value="Shikimate_dh_N"/>
    <property type="match status" value="1"/>
</dbReference>
<dbReference type="SUPFAM" id="SSF53223">
    <property type="entry name" value="Aminoacid dehydrogenase-like, N-terminal domain"/>
    <property type="match status" value="1"/>
</dbReference>
<dbReference type="SUPFAM" id="SSF51735">
    <property type="entry name" value="NAD(P)-binding Rossmann-fold domains"/>
    <property type="match status" value="1"/>
</dbReference>
<protein>
    <recommendedName>
        <fullName evidence="1">Shikimate dehydrogenase (NADP(+))</fullName>
        <shortName evidence="1">SDH</shortName>
        <ecNumber evidence="1">1.1.1.25</ecNumber>
    </recommendedName>
</protein>
<sequence length="263" mass="28364">MLRFAVLGHPVAHSLSPAMHAFALESLGLEGSYEAWDTPLEALPGRLKEVRRAFRGVNLTLPLKEAALAHLDWVSPEAQRIGAVNTVLQVEGRLFGFNTDAPGFLEALKAGGIPLKGPALVLGAGGAGRAVAFALREAGLEVWVWNRTPQRALALAEEFGLRAVPLEKAREARLLVNATRVGLEDPSASPLPAELLPEEGAVVDLVYRPLWTRFLREAQERGLKVQTGLPMLAWQGALAFRLWTGLLPDPSGMEEAARRALGV</sequence>
<name>AROE_THET2</name>
<feature type="chain" id="PRO_0000325179" description="Shikimate dehydrogenase (NADP(+))">
    <location>
        <begin position="1"/>
        <end position="263"/>
    </location>
</feature>
<feature type="active site" description="Proton acceptor" evidence="1">
    <location>
        <position position="64"/>
    </location>
</feature>
<feature type="binding site" evidence="1">
    <location>
        <begin position="14"/>
        <end position="16"/>
    </location>
    <ligand>
        <name>shikimate</name>
        <dbReference type="ChEBI" id="CHEBI:36208"/>
    </ligand>
</feature>
<feature type="binding site" evidence="1">
    <location>
        <position position="60"/>
    </location>
    <ligand>
        <name>shikimate</name>
        <dbReference type="ChEBI" id="CHEBI:36208"/>
    </ligand>
</feature>
<feature type="binding site" evidence="1">
    <location>
        <position position="85"/>
    </location>
    <ligand>
        <name>shikimate</name>
        <dbReference type="ChEBI" id="CHEBI:36208"/>
    </ligand>
</feature>
<feature type="binding site" evidence="1">
    <location>
        <position position="100"/>
    </location>
    <ligand>
        <name>shikimate</name>
        <dbReference type="ChEBI" id="CHEBI:36208"/>
    </ligand>
</feature>
<feature type="binding site" evidence="1">
    <location>
        <begin position="123"/>
        <end position="127"/>
    </location>
    <ligand>
        <name>NADP(+)</name>
        <dbReference type="ChEBI" id="CHEBI:58349"/>
    </ligand>
</feature>
<feature type="binding site" evidence="1">
    <location>
        <begin position="146"/>
        <end position="151"/>
    </location>
    <ligand>
        <name>NADP(+)</name>
        <dbReference type="ChEBI" id="CHEBI:58349"/>
    </ligand>
</feature>
<feature type="binding site" evidence="1">
    <location>
        <position position="205"/>
    </location>
    <ligand>
        <name>NADP(+)</name>
        <dbReference type="ChEBI" id="CHEBI:58349"/>
    </ligand>
</feature>
<feature type="binding site" evidence="1">
    <location>
        <position position="207"/>
    </location>
    <ligand>
        <name>shikimate</name>
        <dbReference type="ChEBI" id="CHEBI:36208"/>
    </ligand>
</feature>
<feature type="binding site" evidence="1">
    <location>
        <position position="228"/>
    </location>
    <ligand>
        <name>NADP(+)</name>
        <dbReference type="ChEBI" id="CHEBI:58349"/>
    </ligand>
</feature>